<proteinExistence type="inferred from homology"/>
<name>FADI_VIBC3</name>
<comment type="function">
    <text evidence="1">Catalyzes the final step of fatty acid oxidation in which acetyl-CoA is released and the CoA ester of a fatty acid two carbons shorter is formed.</text>
</comment>
<comment type="catalytic activity">
    <reaction evidence="1">
        <text>an acyl-CoA + acetyl-CoA = a 3-oxoacyl-CoA + CoA</text>
        <dbReference type="Rhea" id="RHEA:21564"/>
        <dbReference type="ChEBI" id="CHEBI:57287"/>
        <dbReference type="ChEBI" id="CHEBI:57288"/>
        <dbReference type="ChEBI" id="CHEBI:58342"/>
        <dbReference type="ChEBI" id="CHEBI:90726"/>
        <dbReference type="EC" id="2.3.1.16"/>
    </reaction>
</comment>
<comment type="pathway">
    <text evidence="1">Lipid metabolism; fatty acid beta-oxidation.</text>
</comment>
<comment type="subunit">
    <text evidence="1">Heterotetramer of two alpha chains (FadJ) and two beta chains (FadI).</text>
</comment>
<comment type="subcellular location">
    <subcellularLocation>
        <location evidence="1">Cytoplasm</location>
    </subcellularLocation>
</comment>
<comment type="similarity">
    <text evidence="1">Belongs to the thiolase-like superfamily. Thiolase family.</text>
</comment>
<comment type="sequence caution" evidence="2">
    <conflict type="erroneous initiation">
        <sequence resource="EMBL-CDS" id="ABQ21909"/>
    </conflict>
</comment>
<comment type="sequence caution" evidence="2">
    <conflict type="erroneous initiation">
        <sequence resource="EMBL-CDS" id="ACP09072"/>
    </conflict>
</comment>
<organism>
    <name type="scientific">Vibrio cholerae serotype O1 (strain ATCC 39541 / Classical Ogawa 395 / O395)</name>
    <dbReference type="NCBI Taxonomy" id="345073"/>
    <lineage>
        <taxon>Bacteria</taxon>
        <taxon>Pseudomonadati</taxon>
        <taxon>Pseudomonadota</taxon>
        <taxon>Gammaproteobacteria</taxon>
        <taxon>Vibrionales</taxon>
        <taxon>Vibrionaceae</taxon>
        <taxon>Vibrio</taxon>
    </lineage>
</organism>
<accession>A5F2P1</accession>
<accession>C3LZ56</accession>
<feature type="chain" id="PRO_0000323534" description="3-ketoacyl-CoA thiolase">
    <location>
        <begin position="1"/>
        <end position="435"/>
    </location>
</feature>
<feature type="active site" description="Acyl-thioester intermediate" evidence="1">
    <location>
        <position position="98"/>
    </location>
</feature>
<feature type="active site" description="Proton acceptor" evidence="1">
    <location>
        <position position="391"/>
    </location>
</feature>
<feature type="active site" description="Proton acceptor" evidence="1">
    <location>
        <position position="421"/>
    </location>
</feature>
<evidence type="ECO:0000255" key="1">
    <source>
        <dbReference type="HAMAP-Rule" id="MF_01618"/>
    </source>
</evidence>
<evidence type="ECO:0000305" key="2"/>
<gene>
    <name evidence="1" type="primary">fadI</name>
    <name type="synonym">hadHB</name>
    <name type="ordered locus">VC0395_A0564</name>
    <name type="ordered locus">VC395_1060</name>
</gene>
<keyword id="KW-0012">Acyltransferase</keyword>
<keyword id="KW-0963">Cytoplasm</keyword>
<keyword id="KW-0276">Fatty acid metabolism</keyword>
<keyword id="KW-0442">Lipid degradation</keyword>
<keyword id="KW-0443">Lipid metabolism</keyword>
<keyword id="KW-0808">Transferase</keyword>
<reference key="1">
    <citation type="submission" date="2007-03" db="EMBL/GenBank/DDBJ databases">
        <authorList>
            <person name="Heidelberg J."/>
        </authorList>
    </citation>
    <scope>NUCLEOTIDE SEQUENCE [LARGE SCALE GENOMIC DNA]</scope>
    <source>
        <strain>ATCC 39541 / Classical Ogawa 395 / O395</strain>
    </source>
</reference>
<reference key="2">
    <citation type="journal article" date="2008" name="PLoS ONE">
        <title>A recalibrated molecular clock and independent origins for the cholera pandemic clones.</title>
        <authorList>
            <person name="Feng L."/>
            <person name="Reeves P.R."/>
            <person name="Lan R."/>
            <person name="Ren Y."/>
            <person name="Gao C."/>
            <person name="Zhou Z."/>
            <person name="Ren Y."/>
            <person name="Cheng J."/>
            <person name="Wang W."/>
            <person name="Wang J."/>
            <person name="Qian W."/>
            <person name="Li D."/>
            <person name="Wang L."/>
        </authorList>
    </citation>
    <scope>NUCLEOTIDE SEQUENCE [LARGE SCALE GENOMIC DNA]</scope>
    <source>
        <strain>ATCC 39541 / Classical Ogawa 395 / O395</strain>
    </source>
</reference>
<dbReference type="EC" id="2.3.1.16" evidence="1"/>
<dbReference type="EMBL" id="CP000627">
    <property type="protein sequence ID" value="ABQ21909.1"/>
    <property type="status" value="ALT_INIT"/>
    <property type="molecule type" value="Genomic_DNA"/>
</dbReference>
<dbReference type="EMBL" id="CP001235">
    <property type="protein sequence ID" value="ACP09072.1"/>
    <property type="status" value="ALT_INIT"/>
    <property type="molecule type" value="Genomic_DNA"/>
</dbReference>
<dbReference type="RefSeq" id="WP_000517924.1">
    <property type="nucleotide sequence ID" value="NZ_JAACZH010000005.1"/>
</dbReference>
<dbReference type="SMR" id="A5F2P1"/>
<dbReference type="GeneID" id="69720259"/>
<dbReference type="KEGG" id="vco:VC0395_A0564"/>
<dbReference type="KEGG" id="vcr:VC395_1060"/>
<dbReference type="PATRIC" id="fig|345073.21.peg.1028"/>
<dbReference type="eggNOG" id="COG0183">
    <property type="taxonomic scope" value="Bacteria"/>
</dbReference>
<dbReference type="HOGENOM" id="CLU_031026_2_0_6"/>
<dbReference type="OrthoDB" id="8951704at2"/>
<dbReference type="UniPathway" id="UPA00659"/>
<dbReference type="Proteomes" id="UP000000249">
    <property type="component" value="Chromosome 2"/>
</dbReference>
<dbReference type="GO" id="GO:0005829">
    <property type="term" value="C:cytosol"/>
    <property type="evidence" value="ECO:0007669"/>
    <property type="project" value="TreeGrafter"/>
</dbReference>
<dbReference type="GO" id="GO:0003988">
    <property type="term" value="F:acetyl-CoA C-acyltransferase activity"/>
    <property type="evidence" value="ECO:0007669"/>
    <property type="project" value="UniProtKB-UniRule"/>
</dbReference>
<dbReference type="GO" id="GO:0006635">
    <property type="term" value="P:fatty acid beta-oxidation"/>
    <property type="evidence" value="ECO:0007669"/>
    <property type="project" value="UniProtKB-UniRule"/>
</dbReference>
<dbReference type="CDD" id="cd00751">
    <property type="entry name" value="thiolase"/>
    <property type="match status" value="1"/>
</dbReference>
<dbReference type="FunFam" id="3.40.47.10:FF:000011">
    <property type="entry name" value="3-ketoacyl-CoA thiolase"/>
    <property type="match status" value="1"/>
</dbReference>
<dbReference type="Gene3D" id="3.40.47.10">
    <property type="match status" value="1"/>
</dbReference>
<dbReference type="HAMAP" id="MF_01618">
    <property type="entry name" value="FadI"/>
    <property type="match status" value="1"/>
</dbReference>
<dbReference type="InterPro" id="IPR012806">
    <property type="entry name" value="Ac-CoA_C-AcTrfase_FadI"/>
</dbReference>
<dbReference type="InterPro" id="IPR002155">
    <property type="entry name" value="Thiolase"/>
</dbReference>
<dbReference type="InterPro" id="IPR016039">
    <property type="entry name" value="Thiolase-like"/>
</dbReference>
<dbReference type="InterPro" id="IPR020617">
    <property type="entry name" value="Thiolase_C"/>
</dbReference>
<dbReference type="InterPro" id="IPR020613">
    <property type="entry name" value="Thiolase_CS"/>
</dbReference>
<dbReference type="InterPro" id="IPR020616">
    <property type="entry name" value="Thiolase_N"/>
</dbReference>
<dbReference type="NCBIfam" id="TIGR01930">
    <property type="entry name" value="AcCoA-C-Actrans"/>
    <property type="match status" value="1"/>
</dbReference>
<dbReference type="NCBIfam" id="TIGR02446">
    <property type="entry name" value="FadI"/>
    <property type="match status" value="1"/>
</dbReference>
<dbReference type="NCBIfam" id="NF006516">
    <property type="entry name" value="PRK08963.1"/>
    <property type="match status" value="1"/>
</dbReference>
<dbReference type="PANTHER" id="PTHR18919:SF107">
    <property type="entry name" value="ACETYL-COA ACETYLTRANSFERASE, CYTOSOLIC"/>
    <property type="match status" value="1"/>
</dbReference>
<dbReference type="PANTHER" id="PTHR18919">
    <property type="entry name" value="ACETYL-COA C-ACYLTRANSFERASE"/>
    <property type="match status" value="1"/>
</dbReference>
<dbReference type="Pfam" id="PF02803">
    <property type="entry name" value="Thiolase_C"/>
    <property type="match status" value="1"/>
</dbReference>
<dbReference type="Pfam" id="PF00108">
    <property type="entry name" value="Thiolase_N"/>
    <property type="match status" value="1"/>
</dbReference>
<dbReference type="PIRSF" id="PIRSF000429">
    <property type="entry name" value="Ac-CoA_Ac_transf"/>
    <property type="match status" value="1"/>
</dbReference>
<dbReference type="SUPFAM" id="SSF53901">
    <property type="entry name" value="Thiolase-like"/>
    <property type="match status" value="2"/>
</dbReference>
<dbReference type="PROSITE" id="PS00737">
    <property type="entry name" value="THIOLASE_2"/>
    <property type="match status" value="1"/>
</dbReference>
<protein>
    <recommendedName>
        <fullName evidence="1">3-ketoacyl-CoA thiolase</fullName>
        <ecNumber evidence="1">2.3.1.16</ecNumber>
    </recommendedName>
    <alternativeName>
        <fullName evidence="1">ACSs</fullName>
    </alternativeName>
    <alternativeName>
        <fullName evidence="1">Acetyl-CoA acyltransferase</fullName>
    </alternativeName>
    <alternativeName>
        <fullName evidence="1">Acyl-CoA ligase</fullName>
    </alternativeName>
    <alternativeName>
        <fullName evidence="1">Beta-ketothiolase</fullName>
    </alternativeName>
    <alternativeName>
        <fullName evidence="1">Fatty acid oxidation complex subunit beta</fullName>
    </alternativeName>
</protein>
<sequence>MGKQEVRTRSGERVAIVAGLRTPFARQSTEFGQVPAVDLGKMVVQEMMARTAIDPKLIEQVVFGQVVQMPEAPNIAREIVLGTGMSINTDAYSVTRACATSFQAAVNVAESIMAGSIDIGIAGGADSSSVLPIGVSKKLAASLLALSKTKTVGQKLKLLSNLSFKDLMPVPPAVAEYSTGLSMGQTAEQMAKSYAISRAEQDALAHRSHTLAAQAWTEGKIRDEVMTAFPEPYKKWLDMDNNIRMDSKLESYAKLRPAFDRQYGSVTAANSTPLTDGAAAIMLMREGKAKELGLEIMGYIRSYAFAAIGVEKDMLMGPSYATPIALDRAGITLNDLTLIDMHEAFAAQTLANLKMFASDKFAQEQLGRAQAIGEVDMSKFNVLGGSLAYGHPFAATGARMITQTLRELKRRGGGLALNTACAAGGLGAAMILEVE</sequence>